<name>DARP_AERS4</name>
<evidence type="ECO:0000255" key="1">
    <source>
        <dbReference type="HAMAP-Rule" id="MF_00765"/>
    </source>
</evidence>
<evidence type="ECO:0000256" key="2">
    <source>
        <dbReference type="SAM" id="MobiDB-lite"/>
    </source>
</evidence>
<organism>
    <name type="scientific">Aeromonas salmonicida (strain A449)</name>
    <dbReference type="NCBI Taxonomy" id="382245"/>
    <lineage>
        <taxon>Bacteria</taxon>
        <taxon>Pseudomonadati</taxon>
        <taxon>Pseudomonadota</taxon>
        <taxon>Gammaproteobacteria</taxon>
        <taxon>Aeromonadales</taxon>
        <taxon>Aeromonadaceae</taxon>
        <taxon>Aeromonas</taxon>
    </lineage>
</organism>
<dbReference type="EMBL" id="CP000644">
    <property type="protein sequence ID" value="ABO88485.1"/>
    <property type="molecule type" value="Genomic_DNA"/>
</dbReference>
<dbReference type="SMR" id="A4SHW3"/>
<dbReference type="STRING" id="29491.GCA_000820065_03323"/>
<dbReference type="KEGG" id="asa:ASA_0301"/>
<dbReference type="eggNOG" id="COG3028">
    <property type="taxonomic scope" value="Bacteria"/>
</dbReference>
<dbReference type="HOGENOM" id="CLU_106757_2_0_6"/>
<dbReference type="Proteomes" id="UP000000225">
    <property type="component" value="Chromosome"/>
</dbReference>
<dbReference type="GO" id="GO:0005829">
    <property type="term" value="C:cytosol"/>
    <property type="evidence" value="ECO:0007669"/>
    <property type="project" value="TreeGrafter"/>
</dbReference>
<dbReference type="GO" id="GO:0043022">
    <property type="term" value="F:ribosome binding"/>
    <property type="evidence" value="ECO:0007669"/>
    <property type="project" value="UniProtKB-UniRule"/>
</dbReference>
<dbReference type="GO" id="GO:0019843">
    <property type="term" value="F:rRNA binding"/>
    <property type="evidence" value="ECO:0007669"/>
    <property type="project" value="UniProtKB-UniRule"/>
</dbReference>
<dbReference type="GO" id="GO:1902626">
    <property type="term" value="P:assembly of large subunit precursor of preribosome"/>
    <property type="evidence" value="ECO:0007669"/>
    <property type="project" value="UniProtKB-UniRule"/>
</dbReference>
<dbReference type="CDD" id="cd16331">
    <property type="entry name" value="YjgA-like"/>
    <property type="match status" value="1"/>
</dbReference>
<dbReference type="Gene3D" id="1.10.60.30">
    <property type="entry name" value="PSPTO4464-like domains"/>
    <property type="match status" value="2"/>
</dbReference>
<dbReference type="HAMAP" id="MF_00765">
    <property type="entry name" value="DarP"/>
    <property type="match status" value="1"/>
</dbReference>
<dbReference type="InterPro" id="IPR006839">
    <property type="entry name" value="DarP"/>
</dbReference>
<dbReference type="InterPro" id="IPR023153">
    <property type="entry name" value="DarP_sf"/>
</dbReference>
<dbReference type="NCBIfam" id="NF003593">
    <property type="entry name" value="PRK05255.1-1"/>
    <property type="match status" value="1"/>
</dbReference>
<dbReference type="PANTHER" id="PTHR38101">
    <property type="entry name" value="UPF0307 PROTEIN YJGA"/>
    <property type="match status" value="1"/>
</dbReference>
<dbReference type="PANTHER" id="PTHR38101:SF1">
    <property type="entry name" value="UPF0307 PROTEIN YJGA"/>
    <property type="match status" value="1"/>
</dbReference>
<dbReference type="Pfam" id="PF04751">
    <property type="entry name" value="DarP"/>
    <property type="match status" value="1"/>
</dbReference>
<dbReference type="PIRSF" id="PIRSF016183">
    <property type="entry name" value="UCP016183"/>
    <property type="match status" value="1"/>
</dbReference>
<dbReference type="SUPFAM" id="SSF158710">
    <property type="entry name" value="PSPTO4464-like"/>
    <property type="match status" value="1"/>
</dbReference>
<gene>
    <name evidence="1" type="primary">darP</name>
    <name type="ordered locus">ASA_0301</name>
</gene>
<accession>A4SHW3</accession>
<protein>
    <recommendedName>
        <fullName evidence="1">Dual-action ribosomal maturation protein DarP</fullName>
    </recommendedName>
    <alternativeName>
        <fullName evidence="1">Large ribosomal subunit assembly factor DarP</fullName>
    </alternativeName>
</protein>
<proteinExistence type="inferred from homology"/>
<comment type="function">
    <text evidence="1">Member of a network of 50S ribosomal subunit biogenesis factors which assembles along the 30S-50S interface, preventing incorrect 23S rRNA structures from forming. Promotes peptidyl transferase center (PTC) maturation.</text>
</comment>
<comment type="subcellular location">
    <subcellularLocation>
        <location evidence="1">Cytoplasm</location>
    </subcellularLocation>
    <text evidence="1">Associates with late stage pre-50S ribosomal subunits.</text>
</comment>
<comment type="similarity">
    <text evidence="1">Belongs to the DarP family.</text>
</comment>
<sequence>MTGIKKPMSQYQDDNELEDWGPSKTQLKRDAEVLQKLGAEIVSLSHSELEKIPLDEELADAVELGRKLKPKKDESFRRHLQFIGRLMRSRDIEPIEEALSIIKNRHSTVNARLHRLEQWRERLITEGDSALNELMSQFHELDRQKLRQLIRSANKERELNKPPVAYREMYQYLRGEIEDLL</sequence>
<reference key="1">
    <citation type="journal article" date="2008" name="BMC Genomics">
        <title>The genome of Aeromonas salmonicida subsp. salmonicida A449: insights into the evolution of a fish pathogen.</title>
        <authorList>
            <person name="Reith M.E."/>
            <person name="Singh R.K."/>
            <person name="Curtis B."/>
            <person name="Boyd J.M."/>
            <person name="Bouevitch A."/>
            <person name="Kimball J."/>
            <person name="Munholland J."/>
            <person name="Murphy C."/>
            <person name="Sarty D."/>
            <person name="Williams J."/>
            <person name="Nash J.H."/>
            <person name="Johnson S.C."/>
            <person name="Brown L.L."/>
        </authorList>
    </citation>
    <scope>NUCLEOTIDE SEQUENCE [LARGE SCALE GENOMIC DNA]</scope>
    <source>
        <strain>A449</strain>
    </source>
</reference>
<keyword id="KW-0963">Cytoplasm</keyword>
<keyword id="KW-0690">Ribosome biogenesis</keyword>
<keyword id="KW-0694">RNA-binding</keyword>
<keyword id="KW-0699">rRNA-binding</keyword>
<feature type="chain" id="PRO_1000046793" description="Dual-action ribosomal maturation protein DarP">
    <location>
        <begin position="1"/>
        <end position="181"/>
    </location>
</feature>
<feature type="region of interest" description="Disordered" evidence="2">
    <location>
        <begin position="1"/>
        <end position="23"/>
    </location>
</feature>